<evidence type="ECO:0000250" key="1">
    <source>
        <dbReference type="UniProtKB" id="A0A868BQY3"/>
    </source>
</evidence>
<evidence type="ECO:0000250" key="2">
    <source>
        <dbReference type="UniProtKB" id="P04533"/>
    </source>
</evidence>
<evidence type="ECO:0000269" key="3">
    <source>
    </source>
</evidence>
<evidence type="ECO:0000303" key="4">
    <source>
    </source>
</evidence>
<evidence type="ECO:0000305" key="5"/>
<evidence type="ECO:0000312" key="6">
    <source>
        <dbReference type="EMBL" id="AAQ64392.1"/>
    </source>
</evidence>
<comment type="function">
    <text evidence="2 3">Counteracts the host CBASS antiviral defense system. Phosphodiesterase that enables metal-independent hydrolysis of the host cyclic di- and trinucleotide CBASS signals such as 3'3'-cGAMP, 3'3'cUA, and 3'3'3'-cAAA (PubMed:35395152). Does not cleave cGG or cA4 (By similarity). Besides evasion of the CBASS system, might also enable evasion of the type III CRISPR systems that use cA3 signals (By similarity).</text>
</comment>
<comment type="catalytic activity">
    <reaction evidence="3">
        <text>3',3'-cUAMP + H2O = U[3'-5']pAp[3'] + H(+)</text>
        <dbReference type="Rhea" id="RHEA:72835"/>
        <dbReference type="ChEBI" id="CHEBI:15377"/>
        <dbReference type="ChEBI" id="CHEBI:15378"/>
        <dbReference type="ChEBI" id="CHEBI:143809"/>
        <dbReference type="ChEBI" id="CHEBI:192498"/>
    </reaction>
    <physiologicalReaction direction="left-to-right" evidence="3">
        <dbReference type="Rhea" id="RHEA:72836"/>
    </physiologicalReaction>
</comment>
<comment type="catalytic activity">
    <reaction evidence="3">
        <text>3',3',3'-c-tri-AMP + H2O = A[3'-5']pA[3'-5']pAp[3'] + H(+)</text>
        <dbReference type="Rhea" id="RHEA:72859"/>
        <dbReference type="ChEBI" id="CHEBI:15377"/>
        <dbReference type="ChEBI" id="CHEBI:15378"/>
        <dbReference type="ChEBI" id="CHEBI:192523"/>
        <dbReference type="ChEBI" id="CHEBI:192530"/>
    </reaction>
    <physiologicalReaction direction="left-to-right" evidence="3">
        <dbReference type="Rhea" id="RHEA:72860"/>
    </physiologicalReaction>
</comment>
<comment type="catalytic activity">
    <reaction evidence="3">
        <text>3',3',3'-cAAG + H2O = G[3'-5']pA[3'-5']pAp[3'] + H(+)</text>
        <dbReference type="Rhea" id="RHEA:72863"/>
        <dbReference type="ChEBI" id="CHEBI:15377"/>
        <dbReference type="ChEBI" id="CHEBI:15378"/>
        <dbReference type="ChEBI" id="CHEBI:143810"/>
        <dbReference type="ChEBI" id="CHEBI:192532"/>
    </reaction>
    <physiologicalReaction direction="left-to-right" evidence="3">
        <dbReference type="Rhea" id="RHEA:72864"/>
    </physiologicalReaction>
</comment>
<comment type="catalytic activity">
    <reaction evidence="3">
        <text>3',3',3'-cAAG + H2O = A[3'-5']pG[3'-5']pAp[3'] + H(+)</text>
        <dbReference type="Rhea" id="RHEA:72867"/>
        <dbReference type="ChEBI" id="CHEBI:15377"/>
        <dbReference type="ChEBI" id="CHEBI:15378"/>
        <dbReference type="ChEBI" id="CHEBI:143810"/>
        <dbReference type="ChEBI" id="CHEBI:192533"/>
    </reaction>
    <physiologicalReaction direction="left-to-right" evidence="3">
        <dbReference type="Rhea" id="RHEA:72868"/>
    </physiologicalReaction>
</comment>
<comment type="catalytic activity">
    <reaction evidence="3">
        <text>3',3'-cGAMP + H2O = G[3'-5']pAp[3'] + H(+)</text>
        <dbReference type="Rhea" id="RHEA:72831"/>
        <dbReference type="ChEBI" id="CHEBI:15377"/>
        <dbReference type="ChEBI" id="CHEBI:15378"/>
        <dbReference type="ChEBI" id="CHEBI:71501"/>
        <dbReference type="ChEBI" id="CHEBI:192497"/>
    </reaction>
    <physiologicalReaction direction="left-to-right" evidence="3">
        <dbReference type="Rhea" id="RHEA:72832"/>
    </physiologicalReaction>
</comment>
<comment type="similarity">
    <text evidence="5">Belongs to the anti-CBASS protein Acb1 family.</text>
</comment>
<reference key="1">
    <citation type="journal article" date="2003" name="J. Bacteriol.">
        <title>Complete genome sequence of the broad-host-range vibriophage KVP40: comparative genomics of a T4-related bacteriophage.</title>
        <authorList>
            <person name="Miller E.S."/>
            <person name="Heidelberg J.F."/>
            <person name="Eisen J.A."/>
            <person name="Nelson W.C."/>
            <person name="Durkin A.S."/>
            <person name="Ciecko A."/>
            <person name="Feldblyum T.V."/>
            <person name="White O."/>
            <person name="Paulsen I.T."/>
            <person name="Nierman W.C."/>
            <person name="Lee J."/>
            <person name="Szczypinski B."/>
            <person name="Fraser C.M."/>
        </authorList>
    </citation>
    <scope>NUCLEOTIDE SEQUENCE [GENOMIC DNA]</scope>
</reference>
<reference key="2">
    <citation type="journal article" date="2022" name="Nature">
        <title>Phage anti-CBASS and anti-Pycsar nucleases subvert bacterial immunity.</title>
        <authorList>
            <person name="Hobbs S.J."/>
            <person name="Wein T."/>
            <person name="Lu A."/>
            <person name="Morehouse B.R."/>
            <person name="Schnabel J."/>
            <person name="Leavitt A."/>
            <person name="Yirmiya E."/>
            <person name="Sorek R."/>
            <person name="Kranzusch P.J."/>
        </authorList>
    </citation>
    <scope>FUNCTION</scope>
    <scope>CATALYTIC ACTIVITY</scope>
</reference>
<gene>
    <name evidence="6" type="primary">57B</name>
    <name evidence="6" type="ORF">KVP40.0322</name>
</gene>
<dbReference type="EMBL" id="AY283928">
    <property type="protein sequence ID" value="AAQ64392.1"/>
    <property type="molecule type" value="Genomic_DNA"/>
</dbReference>
<dbReference type="RefSeq" id="NP_899569.1">
    <property type="nucleotide sequence ID" value="NC_005083.2"/>
</dbReference>
<dbReference type="SMR" id="Q6WHI1"/>
<dbReference type="GeneID" id="2545796"/>
<dbReference type="KEGG" id="vg:2545796"/>
<dbReference type="OrthoDB" id="11210at10239"/>
<dbReference type="Proteomes" id="UP000001785">
    <property type="component" value="Genome"/>
</dbReference>
<dbReference type="GO" id="GO:0016787">
    <property type="term" value="F:hydrolase activity"/>
    <property type="evidence" value="ECO:0007669"/>
    <property type="project" value="UniProtKB-KW"/>
</dbReference>
<dbReference type="GO" id="GO:0052170">
    <property type="term" value="P:symbiont-mediated suppression of host innate immune response"/>
    <property type="evidence" value="ECO:0007669"/>
    <property type="project" value="UniProtKB-KW"/>
</dbReference>
<dbReference type="Gene3D" id="3.90.1140.10">
    <property type="entry name" value="Cyclic phosphodiesterase"/>
    <property type="match status" value="1"/>
</dbReference>
<dbReference type="InterPro" id="IPR056175">
    <property type="entry name" value="Acb1-like_C"/>
</dbReference>
<dbReference type="InterPro" id="IPR009097">
    <property type="entry name" value="Cyclic_Pdiesterase"/>
</dbReference>
<dbReference type="Pfam" id="PF23474">
    <property type="entry name" value="Acb1"/>
    <property type="match status" value="1"/>
</dbReference>
<dbReference type="SUPFAM" id="SSF55144">
    <property type="entry name" value="LigT-like"/>
    <property type="match status" value="1"/>
</dbReference>
<sequence>MKLSKFLESQGTYVGIKLDEASKQELVRLQKTLRLKNPLDPDKFHVTVLYSRKQIDVPVVDTTFVATVEQVDCWKTQDGKHAVVAKMSCPALVERHEDLISIGGTHDYPDYTPHVTLSYDDVITPMFINTEVRLVDEYIEPLDLEWVANND</sequence>
<name>ACB1_BPKVM</name>
<proteinExistence type="evidence at protein level"/>
<organism>
    <name type="scientific">Vibrio phage KVP40 (isolate Vibrio parahaemolyticus/Japan/Matsuzaki/1991)</name>
    <name type="common">KVP40</name>
    <name type="synonym">Bacteriophage KVP40</name>
    <dbReference type="NCBI Taxonomy" id="75320"/>
    <lineage>
        <taxon>Viruses</taxon>
        <taxon>Duplodnaviria</taxon>
        <taxon>Heunggongvirae</taxon>
        <taxon>Uroviricota</taxon>
        <taxon>Caudoviricetes</taxon>
        <taxon>Straboviridae</taxon>
        <taxon>Schizotequatrovirus</taxon>
        <taxon>Schizotequatrovirus KVP40</taxon>
    </lineage>
</organism>
<protein>
    <recommendedName>
        <fullName evidence="4">Anti-CBASS protein Acb1</fullName>
        <shortName evidence="4">Acb1</shortName>
    </recommendedName>
    <alternativeName>
        <fullName>Gene product 57B</fullName>
        <shortName>gp57B</shortName>
    </alternativeName>
</protein>
<organismHost>
    <name type="scientific">Vibrio parahaemolyticus</name>
    <dbReference type="NCBI Taxonomy" id="670"/>
</organismHost>
<feature type="chain" id="PRO_0000456663" description="Anti-CBASS protein Acb1">
    <location>
        <begin position="1"/>
        <end position="151"/>
    </location>
</feature>
<feature type="active site" evidence="1">
    <location>
        <position position="45"/>
    </location>
</feature>
<feature type="active site" evidence="1">
    <location>
        <position position="47"/>
    </location>
</feature>
<feature type="active site" evidence="1">
    <location>
        <position position="114"/>
    </location>
</feature>
<feature type="active site" evidence="1">
    <location>
        <position position="116"/>
    </location>
</feature>
<feature type="binding site" evidence="1">
    <location>
        <position position="13"/>
    </location>
    <ligand>
        <name>3',3'-cGAMP</name>
        <dbReference type="ChEBI" id="CHEBI:71501"/>
    </ligand>
</feature>
<feature type="binding site" evidence="1">
    <location>
        <position position="13"/>
    </location>
    <ligand>
        <name>3',3'-cUAMP</name>
        <dbReference type="ChEBI" id="CHEBI:143809"/>
    </ligand>
</feature>
<feature type="binding site" evidence="1">
    <location>
        <position position="108"/>
    </location>
    <ligand>
        <name>3',3'-cGAMP</name>
        <dbReference type="ChEBI" id="CHEBI:71501"/>
    </ligand>
</feature>
<feature type="binding site" evidence="1">
    <location>
        <position position="108"/>
    </location>
    <ligand>
        <name>3',3'-cUAMP</name>
        <dbReference type="ChEBI" id="CHEBI:143809"/>
    </ligand>
</feature>
<feature type="binding site" description="specific to adenosine" evidence="1">
    <location>
        <position position="140"/>
    </location>
    <ligand>
        <name>3',3'-cGAMP</name>
        <dbReference type="ChEBI" id="CHEBI:71501"/>
    </ligand>
</feature>
<feature type="binding site" description="specific to adenosine" evidence="1">
    <location>
        <position position="140"/>
    </location>
    <ligand>
        <name>3',3'-cUAMP</name>
        <dbReference type="ChEBI" id="CHEBI:143809"/>
    </ligand>
</feature>
<feature type="binding site" evidence="1">
    <location>
        <position position="146"/>
    </location>
    <ligand>
        <name>3',3'-cGAMP</name>
        <dbReference type="ChEBI" id="CHEBI:71501"/>
    </ligand>
</feature>
<feature type="binding site" evidence="1">
    <location>
        <position position="146"/>
    </location>
    <ligand>
        <name>3',3'-cUAMP</name>
        <dbReference type="ChEBI" id="CHEBI:143809"/>
    </ligand>
</feature>
<accession>Q6WHI1</accession>
<keyword id="KW-0945">Host-virus interaction</keyword>
<keyword id="KW-0378">Hydrolase</keyword>
<keyword id="KW-1090">Inhibition of host innate immune response by virus</keyword>
<keyword id="KW-1185">Reference proteome</keyword>
<keyword id="KW-0899">Viral immunoevasion</keyword>